<gene>
    <name evidence="1" type="primary">dcyD</name>
    <name type="ordered locus">EC55989_2140</name>
</gene>
<organism>
    <name type="scientific">Escherichia coli (strain 55989 / EAEC)</name>
    <dbReference type="NCBI Taxonomy" id="585055"/>
    <lineage>
        <taxon>Bacteria</taxon>
        <taxon>Pseudomonadati</taxon>
        <taxon>Pseudomonadota</taxon>
        <taxon>Gammaproteobacteria</taxon>
        <taxon>Enterobacterales</taxon>
        <taxon>Enterobacteriaceae</taxon>
        <taxon>Escherichia</taxon>
    </lineage>
</organism>
<comment type="function">
    <text evidence="1">Catalyzes the alpha,beta-elimination reaction of D-cysteine and of several D-cysteine derivatives. It could be a defense mechanism against D-cysteine.</text>
</comment>
<comment type="catalytic activity">
    <reaction evidence="1">
        <text>D-cysteine + H2O = hydrogen sulfide + pyruvate + NH4(+) + H(+)</text>
        <dbReference type="Rhea" id="RHEA:11268"/>
        <dbReference type="ChEBI" id="CHEBI:15361"/>
        <dbReference type="ChEBI" id="CHEBI:15377"/>
        <dbReference type="ChEBI" id="CHEBI:15378"/>
        <dbReference type="ChEBI" id="CHEBI:28938"/>
        <dbReference type="ChEBI" id="CHEBI:29919"/>
        <dbReference type="ChEBI" id="CHEBI:35236"/>
        <dbReference type="EC" id="4.4.1.15"/>
    </reaction>
</comment>
<comment type="cofactor">
    <cofactor evidence="1">
        <name>pyridoxal 5'-phosphate</name>
        <dbReference type="ChEBI" id="CHEBI:597326"/>
    </cofactor>
</comment>
<comment type="subunit">
    <text evidence="1">Homodimer.</text>
</comment>
<comment type="similarity">
    <text evidence="1">Belongs to the ACC deaminase/D-cysteine desulfhydrase family.</text>
</comment>
<sequence length="328" mass="35153">MPLHNLTRFPRLEFIGAPTPLEYLPRFSDYLGREIFIKRDDVTPMAMGGNKLRKLEFLAADALREGADTLITAGAIQSNHVRQTAAVAAKLGLHCVALLENPIGTTAENYLTNGNRLLLDLFNTQIEMCDALTDPNAQLEELATRVEAQGFRPYVIPVGGSNALGALGYVESALEIAQQCEGAVNISSVVVASGSAGTHAGLAVGLEHLMPESELIGVTVSRSVADQLPKVVNLQQAIAKELELTASAEILLWDDYFAPGYGVPNDEGMEAVKLLARLEGILLDPVYTGKAMAGLIDGISQKRFKDEGPILFIHTGGAPALFAYHPHV</sequence>
<accession>B7L8T2</accession>
<protein>
    <recommendedName>
        <fullName evidence="1">D-cysteine desulfhydrase</fullName>
        <ecNumber evidence="1">4.4.1.15</ecNumber>
    </recommendedName>
</protein>
<keyword id="KW-0456">Lyase</keyword>
<keyword id="KW-0663">Pyridoxal phosphate</keyword>
<keyword id="KW-1185">Reference proteome</keyword>
<evidence type="ECO:0000255" key="1">
    <source>
        <dbReference type="HAMAP-Rule" id="MF_01045"/>
    </source>
</evidence>
<reference key="1">
    <citation type="journal article" date="2009" name="PLoS Genet.">
        <title>Organised genome dynamics in the Escherichia coli species results in highly diverse adaptive paths.</title>
        <authorList>
            <person name="Touchon M."/>
            <person name="Hoede C."/>
            <person name="Tenaillon O."/>
            <person name="Barbe V."/>
            <person name="Baeriswyl S."/>
            <person name="Bidet P."/>
            <person name="Bingen E."/>
            <person name="Bonacorsi S."/>
            <person name="Bouchier C."/>
            <person name="Bouvet O."/>
            <person name="Calteau A."/>
            <person name="Chiapello H."/>
            <person name="Clermont O."/>
            <person name="Cruveiller S."/>
            <person name="Danchin A."/>
            <person name="Diard M."/>
            <person name="Dossat C."/>
            <person name="Karoui M.E."/>
            <person name="Frapy E."/>
            <person name="Garry L."/>
            <person name="Ghigo J.M."/>
            <person name="Gilles A.M."/>
            <person name="Johnson J."/>
            <person name="Le Bouguenec C."/>
            <person name="Lescat M."/>
            <person name="Mangenot S."/>
            <person name="Martinez-Jehanne V."/>
            <person name="Matic I."/>
            <person name="Nassif X."/>
            <person name="Oztas S."/>
            <person name="Petit M.A."/>
            <person name="Pichon C."/>
            <person name="Rouy Z."/>
            <person name="Ruf C.S."/>
            <person name="Schneider D."/>
            <person name="Tourret J."/>
            <person name="Vacherie B."/>
            <person name="Vallenet D."/>
            <person name="Medigue C."/>
            <person name="Rocha E.P.C."/>
            <person name="Denamur E."/>
        </authorList>
    </citation>
    <scope>NUCLEOTIDE SEQUENCE [LARGE SCALE GENOMIC DNA]</scope>
    <source>
        <strain>55989 / EAEC</strain>
    </source>
</reference>
<proteinExistence type="inferred from homology"/>
<dbReference type="EC" id="4.4.1.15" evidence="1"/>
<dbReference type="EMBL" id="CU928145">
    <property type="protein sequence ID" value="CAU98014.1"/>
    <property type="molecule type" value="Genomic_DNA"/>
</dbReference>
<dbReference type="RefSeq" id="WP_001128215.1">
    <property type="nucleotide sequence ID" value="NC_011748.1"/>
</dbReference>
<dbReference type="SMR" id="B7L8T2"/>
<dbReference type="GeneID" id="75205835"/>
<dbReference type="KEGG" id="eck:EC55989_2140"/>
<dbReference type="HOGENOM" id="CLU_048897_1_0_6"/>
<dbReference type="Proteomes" id="UP000000746">
    <property type="component" value="Chromosome"/>
</dbReference>
<dbReference type="GO" id="GO:0019148">
    <property type="term" value="F:D-cysteine desulfhydrase activity"/>
    <property type="evidence" value="ECO:0007669"/>
    <property type="project" value="UniProtKB-UniRule"/>
</dbReference>
<dbReference type="GO" id="GO:0046416">
    <property type="term" value="P:D-amino acid metabolic process"/>
    <property type="evidence" value="ECO:0007669"/>
    <property type="project" value="UniProtKB-UniRule"/>
</dbReference>
<dbReference type="CDD" id="cd06449">
    <property type="entry name" value="ACCD"/>
    <property type="match status" value="1"/>
</dbReference>
<dbReference type="FunFam" id="3.40.50.1100:FF:000019">
    <property type="entry name" value="D-cysteine desulfhydrase"/>
    <property type="match status" value="1"/>
</dbReference>
<dbReference type="Gene3D" id="3.40.50.1100">
    <property type="match status" value="2"/>
</dbReference>
<dbReference type="HAMAP" id="MF_01045">
    <property type="entry name" value="D_Cys_desulfhydr"/>
    <property type="match status" value="1"/>
</dbReference>
<dbReference type="InterPro" id="IPR027278">
    <property type="entry name" value="ACCD_DCysDesulf"/>
</dbReference>
<dbReference type="InterPro" id="IPR005966">
    <property type="entry name" value="D-Cys_desShydrase"/>
</dbReference>
<dbReference type="InterPro" id="IPR023702">
    <property type="entry name" value="D_Cys_desulphydr_bac"/>
</dbReference>
<dbReference type="InterPro" id="IPR001926">
    <property type="entry name" value="TrpB-like_PALP"/>
</dbReference>
<dbReference type="InterPro" id="IPR036052">
    <property type="entry name" value="TrpB-like_PALP_sf"/>
</dbReference>
<dbReference type="NCBIfam" id="TIGR01275">
    <property type="entry name" value="ACC_deam_rel"/>
    <property type="match status" value="1"/>
</dbReference>
<dbReference type="NCBIfam" id="NF003029">
    <property type="entry name" value="PRK03910.1-1"/>
    <property type="match status" value="1"/>
</dbReference>
<dbReference type="NCBIfam" id="NF003030">
    <property type="entry name" value="PRK03910.1-3"/>
    <property type="match status" value="1"/>
</dbReference>
<dbReference type="NCBIfam" id="NF003032">
    <property type="entry name" value="PRK03910.1-5"/>
    <property type="match status" value="1"/>
</dbReference>
<dbReference type="PANTHER" id="PTHR43780">
    <property type="entry name" value="1-AMINOCYCLOPROPANE-1-CARBOXYLATE DEAMINASE-RELATED"/>
    <property type="match status" value="1"/>
</dbReference>
<dbReference type="PANTHER" id="PTHR43780:SF2">
    <property type="entry name" value="1-AMINOCYCLOPROPANE-1-CARBOXYLATE DEAMINASE-RELATED"/>
    <property type="match status" value="1"/>
</dbReference>
<dbReference type="Pfam" id="PF00291">
    <property type="entry name" value="PALP"/>
    <property type="match status" value="1"/>
</dbReference>
<dbReference type="PIRSF" id="PIRSF006278">
    <property type="entry name" value="ACCD_DCysDesulf"/>
    <property type="match status" value="1"/>
</dbReference>
<dbReference type="SUPFAM" id="SSF53686">
    <property type="entry name" value="Tryptophan synthase beta subunit-like PLP-dependent enzymes"/>
    <property type="match status" value="1"/>
</dbReference>
<name>DCYD_ECO55</name>
<feature type="chain" id="PRO_1000149600" description="D-cysteine desulfhydrase">
    <location>
        <begin position="1"/>
        <end position="328"/>
    </location>
</feature>
<feature type="modified residue" description="N6-(pyridoxal phosphate)lysine" evidence="1">
    <location>
        <position position="51"/>
    </location>
</feature>